<comment type="function">
    <text evidence="1">Located at the top of the head of the 30S subunit, it contacts several helices of the 16S rRNA. In the 70S ribosome it contacts the 23S rRNA (bridge B1a) and protein L5 of the 50S subunit (bridge B1b), connecting the 2 subunits; these bridges are implicated in subunit movement. Contacts the tRNAs in the A and P-sites.</text>
</comment>
<comment type="subunit">
    <text evidence="1">Part of the 30S ribosomal subunit. Forms a loose heterodimer with protein S19. Forms two bridges to the 50S subunit in the 70S ribosome.</text>
</comment>
<comment type="similarity">
    <text evidence="1">Belongs to the universal ribosomal protein uS13 family.</text>
</comment>
<proteinExistence type="inferred from homology"/>
<accession>A9IHS0</accession>
<organism>
    <name type="scientific">Bordetella petrii (strain ATCC BAA-461 / DSM 12804 / CCUG 43448)</name>
    <dbReference type="NCBI Taxonomy" id="340100"/>
    <lineage>
        <taxon>Bacteria</taxon>
        <taxon>Pseudomonadati</taxon>
        <taxon>Pseudomonadota</taxon>
        <taxon>Betaproteobacteria</taxon>
        <taxon>Burkholderiales</taxon>
        <taxon>Alcaligenaceae</taxon>
        <taxon>Bordetella</taxon>
    </lineage>
</organism>
<reference key="1">
    <citation type="journal article" date="2008" name="BMC Genomics">
        <title>The missing link: Bordetella petrii is endowed with both the metabolic versatility of environmental bacteria and virulence traits of pathogenic Bordetellae.</title>
        <authorList>
            <person name="Gross R."/>
            <person name="Guzman C.A."/>
            <person name="Sebaihia M."/>
            <person name="Martin dos Santos V.A.P."/>
            <person name="Pieper D.H."/>
            <person name="Koebnik R."/>
            <person name="Lechner M."/>
            <person name="Bartels D."/>
            <person name="Buhrmester J."/>
            <person name="Choudhuri J.V."/>
            <person name="Ebensen T."/>
            <person name="Gaigalat L."/>
            <person name="Herrmann S."/>
            <person name="Khachane A.N."/>
            <person name="Larisch C."/>
            <person name="Link S."/>
            <person name="Linke B."/>
            <person name="Meyer F."/>
            <person name="Mormann S."/>
            <person name="Nakunst D."/>
            <person name="Rueckert C."/>
            <person name="Schneiker-Bekel S."/>
            <person name="Schulze K."/>
            <person name="Voerholter F.-J."/>
            <person name="Yevsa T."/>
            <person name="Engle J.T."/>
            <person name="Goldman W.E."/>
            <person name="Puehler A."/>
            <person name="Goebel U.B."/>
            <person name="Goesmann A."/>
            <person name="Bloecker H."/>
            <person name="Kaiser O."/>
            <person name="Martinez-Arias R."/>
        </authorList>
    </citation>
    <scope>NUCLEOTIDE SEQUENCE [LARGE SCALE GENOMIC DNA]</scope>
    <source>
        <strain>ATCC BAA-461 / DSM 12804 / CCUG 43448</strain>
    </source>
</reference>
<keyword id="KW-0687">Ribonucleoprotein</keyword>
<keyword id="KW-0689">Ribosomal protein</keyword>
<keyword id="KW-0694">RNA-binding</keyword>
<keyword id="KW-0699">rRNA-binding</keyword>
<keyword id="KW-0820">tRNA-binding</keyword>
<name>RS13_BORPD</name>
<feature type="chain" id="PRO_1000141226" description="Small ribosomal subunit protein uS13">
    <location>
        <begin position="1"/>
        <end position="121"/>
    </location>
</feature>
<feature type="region of interest" description="Disordered" evidence="2">
    <location>
        <begin position="91"/>
        <end position="121"/>
    </location>
</feature>
<dbReference type="EMBL" id="AM902716">
    <property type="protein sequence ID" value="CAP45279.1"/>
    <property type="molecule type" value="Genomic_DNA"/>
</dbReference>
<dbReference type="SMR" id="A9IHS0"/>
<dbReference type="STRING" id="94624.Bpet4927"/>
<dbReference type="KEGG" id="bpt:Bpet4927"/>
<dbReference type="eggNOG" id="COG0099">
    <property type="taxonomic scope" value="Bacteria"/>
</dbReference>
<dbReference type="Proteomes" id="UP000001225">
    <property type="component" value="Chromosome"/>
</dbReference>
<dbReference type="GO" id="GO:0005829">
    <property type="term" value="C:cytosol"/>
    <property type="evidence" value="ECO:0007669"/>
    <property type="project" value="TreeGrafter"/>
</dbReference>
<dbReference type="GO" id="GO:0015935">
    <property type="term" value="C:small ribosomal subunit"/>
    <property type="evidence" value="ECO:0007669"/>
    <property type="project" value="TreeGrafter"/>
</dbReference>
<dbReference type="GO" id="GO:0019843">
    <property type="term" value="F:rRNA binding"/>
    <property type="evidence" value="ECO:0007669"/>
    <property type="project" value="UniProtKB-UniRule"/>
</dbReference>
<dbReference type="GO" id="GO:0003735">
    <property type="term" value="F:structural constituent of ribosome"/>
    <property type="evidence" value="ECO:0007669"/>
    <property type="project" value="InterPro"/>
</dbReference>
<dbReference type="GO" id="GO:0000049">
    <property type="term" value="F:tRNA binding"/>
    <property type="evidence" value="ECO:0007669"/>
    <property type="project" value="UniProtKB-UniRule"/>
</dbReference>
<dbReference type="GO" id="GO:0006412">
    <property type="term" value="P:translation"/>
    <property type="evidence" value="ECO:0007669"/>
    <property type="project" value="UniProtKB-UniRule"/>
</dbReference>
<dbReference type="FunFam" id="1.10.8.50:FF:000001">
    <property type="entry name" value="30S ribosomal protein S13"/>
    <property type="match status" value="1"/>
</dbReference>
<dbReference type="FunFam" id="4.10.910.10:FF:000001">
    <property type="entry name" value="30S ribosomal protein S13"/>
    <property type="match status" value="1"/>
</dbReference>
<dbReference type="Gene3D" id="1.10.8.50">
    <property type="match status" value="1"/>
</dbReference>
<dbReference type="Gene3D" id="4.10.910.10">
    <property type="entry name" value="30s ribosomal protein s13, domain 2"/>
    <property type="match status" value="1"/>
</dbReference>
<dbReference type="HAMAP" id="MF_01315">
    <property type="entry name" value="Ribosomal_uS13"/>
    <property type="match status" value="1"/>
</dbReference>
<dbReference type="InterPro" id="IPR027437">
    <property type="entry name" value="Rbsml_uS13_C"/>
</dbReference>
<dbReference type="InterPro" id="IPR001892">
    <property type="entry name" value="Ribosomal_uS13"/>
</dbReference>
<dbReference type="InterPro" id="IPR010979">
    <property type="entry name" value="Ribosomal_uS13-like_H2TH"/>
</dbReference>
<dbReference type="InterPro" id="IPR019980">
    <property type="entry name" value="Ribosomal_uS13_bac-type"/>
</dbReference>
<dbReference type="InterPro" id="IPR018269">
    <property type="entry name" value="Ribosomal_uS13_CS"/>
</dbReference>
<dbReference type="NCBIfam" id="TIGR03631">
    <property type="entry name" value="uS13_bact"/>
    <property type="match status" value="1"/>
</dbReference>
<dbReference type="PANTHER" id="PTHR10871">
    <property type="entry name" value="30S RIBOSOMAL PROTEIN S13/40S RIBOSOMAL PROTEIN S18"/>
    <property type="match status" value="1"/>
</dbReference>
<dbReference type="PANTHER" id="PTHR10871:SF1">
    <property type="entry name" value="SMALL RIBOSOMAL SUBUNIT PROTEIN US13M"/>
    <property type="match status" value="1"/>
</dbReference>
<dbReference type="Pfam" id="PF00416">
    <property type="entry name" value="Ribosomal_S13"/>
    <property type="match status" value="1"/>
</dbReference>
<dbReference type="PIRSF" id="PIRSF002134">
    <property type="entry name" value="Ribosomal_S13"/>
    <property type="match status" value="1"/>
</dbReference>
<dbReference type="SUPFAM" id="SSF46946">
    <property type="entry name" value="S13-like H2TH domain"/>
    <property type="match status" value="1"/>
</dbReference>
<dbReference type="PROSITE" id="PS00646">
    <property type="entry name" value="RIBOSOMAL_S13_1"/>
    <property type="match status" value="1"/>
</dbReference>
<dbReference type="PROSITE" id="PS50159">
    <property type="entry name" value="RIBOSOMAL_S13_2"/>
    <property type="match status" value="1"/>
</dbReference>
<evidence type="ECO:0000255" key="1">
    <source>
        <dbReference type="HAMAP-Rule" id="MF_01315"/>
    </source>
</evidence>
<evidence type="ECO:0000256" key="2">
    <source>
        <dbReference type="SAM" id="MobiDB-lite"/>
    </source>
</evidence>
<evidence type="ECO:0000305" key="3"/>
<gene>
    <name evidence="1" type="primary">rpsM</name>
    <name type="ordered locus">Bpet4927</name>
</gene>
<protein>
    <recommendedName>
        <fullName evidence="1">Small ribosomal subunit protein uS13</fullName>
    </recommendedName>
    <alternativeName>
        <fullName evidence="3">30S ribosomal protein S13</fullName>
    </alternativeName>
</protein>
<sequence length="121" mass="13586">MARIAGINIPPQQHAEIGLTAIFGIGRTRARKICEAANVPLSKKVKDLTDAELERIREHVGVFTVEGDLRREVQLSIKRLIDLGTYRGMRHKRGLPVRGQRTRTNARTRKGPRRAAASLKK</sequence>